<comment type="function">
    <text evidence="1">Transfers the 4'-phosphopantetheine moiety from coenzyme A to a Ser of acyl-carrier-protein.</text>
</comment>
<comment type="catalytic activity">
    <reaction evidence="1">
        <text>apo-[ACP] + CoA = holo-[ACP] + adenosine 3',5'-bisphosphate + H(+)</text>
        <dbReference type="Rhea" id="RHEA:12068"/>
        <dbReference type="Rhea" id="RHEA-COMP:9685"/>
        <dbReference type="Rhea" id="RHEA-COMP:9690"/>
        <dbReference type="ChEBI" id="CHEBI:15378"/>
        <dbReference type="ChEBI" id="CHEBI:29999"/>
        <dbReference type="ChEBI" id="CHEBI:57287"/>
        <dbReference type="ChEBI" id="CHEBI:58343"/>
        <dbReference type="ChEBI" id="CHEBI:64479"/>
        <dbReference type="EC" id="2.7.8.7"/>
    </reaction>
</comment>
<comment type="cofactor">
    <cofactor evidence="1">
        <name>Mg(2+)</name>
        <dbReference type="ChEBI" id="CHEBI:18420"/>
    </cofactor>
</comment>
<comment type="subcellular location">
    <subcellularLocation>
        <location evidence="1">Cytoplasm</location>
    </subcellularLocation>
</comment>
<comment type="similarity">
    <text evidence="1">Belongs to the P-Pant transferase superfamily. AcpS family.</text>
</comment>
<name>ACPS_BUCCC</name>
<feature type="chain" id="PRO_1000008393" description="Holo-[acyl-carrier-protein] synthase">
    <location>
        <begin position="1"/>
        <end position="126"/>
    </location>
</feature>
<feature type="binding site" evidence="1">
    <location>
        <position position="9"/>
    </location>
    <ligand>
        <name>Mg(2+)</name>
        <dbReference type="ChEBI" id="CHEBI:18420"/>
    </ligand>
</feature>
<feature type="binding site" evidence="1">
    <location>
        <position position="58"/>
    </location>
    <ligand>
        <name>Mg(2+)</name>
        <dbReference type="ChEBI" id="CHEBI:18420"/>
    </ligand>
</feature>
<keyword id="KW-0963">Cytoplasm</keyword>
<keyword id="KW-0275">Fatty acid biosynthesis</keyword>
<keyword id="KW-0276">Fatty acid metabolism</keyword>
<keyword id="KW-0444">Lipid biosynthesis</keyword>
<keyword id="KW-0443">Lipid metabolism</keyword>
<keyword id="KW-0460">Magnesium</keyword>
<keyword id="KW-0479">Metal-binding</keyword>
<keyword id="KW-1185">Reference proteome</keyword>
<keyword id="KW-0808">Transferase</keyword>
<dbReference type="EC" id="2.7.8.7" evidence="1"/>
<dbReference type="EMBL" id="CP000263">
    <property type="protein sequence ID" value="ABJ90633.1"/>
    <property type="molecule type" value="Genomic_DNA"/>
</dbReference>
<dbReference type="RefSeq" id="WP_011672552.1">
    <property type="nucleotide sequence ID" value="NC_008513.1"/>
</dbReference>
<dbReference type="SMR" id="Q057R6"/>
<dbReference type="STRING" id="372461.BCc_161"/>
<dbReference type="KEGG" id="bcc:BCc_161"/>
<dbReference type="eggNOG" id="COG0736">
    <property type="taxonomic scope" value="Bacteria"/>
</dbReference>
<dbReference type="HOGENOM" id="CLU_089696_3_1_6"/>
<dbReference type="OrthoDB" id="517356at2"/>
<dbReference type="Proteomes" id="UP000000669">
    <property type="component" value="Chromosome"/>
</dbReference>
<dbReference type="GO" id="GO:0005737">
    <property type="term" value="C:cytoplasm"/>
    <property type="evidence" value="ECO:0007669"/>
    <property type="project" value="UniProtKB-SubCell"/>
</dbReference>
<dbReference type="GO" id="GO:0008897">
    <property type="term" value="F:holo-[acyl-carrier-protein] synthase activity"/>
    <property type="evidence" value="ECO:0007669"/>
    <property type="project" value="UniProtKB-UniRule"/>
</dbReference>
<dbReference type="GO" id="GO:0000287">
    <property type="term" value="F:magnesium ion binding"/>
    <property type="evidence" value="ECO:0007669"/>
    <property type="project" value="UniProtKB-UniRule"/>
</dbReference>
<dbReference type="GO" id="GO:0006633">
    <property type="term" value="P:fatty acid biosynthetic process"/>
    <property type="evidence" value="ECO:0007669"/>
    <property type="project" value="UniProtKB-UniRule"/>
</dbReference>
<dbReference type="Gene3D" id="3.90.470.20">
    <property type="entry name" value="4'-phosphopantetheinyl transferase domain"/>
    <property type="match status" value="1"/>
</dbReference>
<dbReference type="HAMAP" id="MF_00101">
    <property type="entry name" value="AcpS"/>
    <property type="match status" value="1"/>
</dbReference>
<dbReference type="InterPro" id="IPR008278">
    <property type="entry name" value="4-PPantetheinyl_Trfase_dom"/>
</dbReference>
<dbReference type="InterPro" id="IPR037143">
    <property type="entry name" value="4-PPantetheinyl_Trfase_dom_sf"/>
</dbReference>
<dbReference type="InterPro" id="IPR002582">
    <property type="entry name" value="ACPS"/>
</dbReference>
<dbReference type="InterPro" id="IPR004568">
    <property type="entry name" value="Ppantetheine-prot_Trfase_dom"/>
</dbReference>
<dbReference type="NCBIfam" id="TIGR00516">
    <property type="entry name" value="acpS"/>
    <property type="match status" value="1"/>
</dbReference>
<dbReference type="NCBIfam" id="TIGR00556">
    <property type="entry name" value="pantethn_trn"/>
    <property type="match status" value="1"/>
</dbReference>
<dbReference type="Pfam" id="PF01648">
    <property type="entry name" value="ACPS"/>
    <property type="match status" value="1"/>
</dbReference>
<dbReference type="SUPFAM" id="SSF56214">
    <property type="entry name" value="4'-phosphopantetheinyl transferase"/>
    <property type="match status" value="1"/>
</dbReference>
<accession>Q057R6</accession>
<protein>
    <recommendedName>
        <fullName evidence="1">Holo-[acyl-carrier-protein] synthase</fullName>
        <shortName evidence="1">Holo-ACP synthase</shortName>
        <ecNumber evidence="1">2.7.8.7</ecNumber>
    </recommendedName>
    <alternativeName>
        <fullName evidence="1">4'-phosphopantetheinyl transferase AcpS</fullName>
    </alternativeName>
</protein>
<proteinExistence type="inferred from homology"/>
<organism>
    <name type="scientific">Buchnera aphidicola subsp. Cinara cedri (strain Cc)</name>
    <dbReference type="NCBI Taxonomy" id="372461"/>
    <lineage>
        <taxon>Bacteria</taxon>
        <taxon>Pseudomonadati</taxon>
        <taxon>Pseudomonadota</taxon>
        <taxon>Gammaproteobacteria</taxon>
        <taxon>Enterobacterales</taxon>
        <taxon>Erwiniaceae</taxon>
        <taxon>Buchnera</taxon>
    </lineage>
</organism>
<sequence length="126" mass="14661">MAIIGIGIDVINIFRFKKLIINYGIKIPKKILSKKELIEYSYTHKKEKFLAIRFSIKEAIAKAIGISIFKNNFLNNCEIFYNKKKKIQLTTLGYIKKIFKKSQVKKIFLSVTDSNKHTYAIAILEK</sequence>
<gene>
    <name evidence="1" type="primary">acpS</name>
    <name type="ordered locus">BCc_161</name>
</gene>
<reference key="1">
    <citation type="journal article" date="2006" name="Science">
        <title>A small microbial genome: the end of a long symbiotic relationship?</title>
        <authorList>
            <person name="Perez-Brocal V."/>
            <person name="Gil R."/>
            <person name="Ramos S."/>
            <person name="Lamelas A."/>
            <person name="Postigo M."/>
            <person name="Michelena J.M."/>
            <person name="Silva F.J."/>
            <person name="Moya A."/>
            <person name="Latorre A."/>
        </authorList>
    </citation>
    <scope>NUCLEOTIDE SEQUENCE [LARGE SCALE GENOMIC DNA]</scope>
    <source>
        <strain>Cc</strain>
    </source>
</reference>
<evidence type="ECO:0000255" key="1">
    <source>
        <dbReference type="HAMAP-Rule" id="MF_00101"/>
    </source>
</evidence>